<feature type="peptide" id="PRO_0000045027" description="Kappa-theraphotoxin-Tb1b">
    <location>
        <begin position="1"/>
        <end position="35"/>
    </location>
</feature>
<feature type="disulfide bond" evidence="2">
    <location>
        <begin position="3"/>
        <end position="18"/>
    </location>
</feature>
<feature type="disulfide bond" evidence="2">
    <location>
        <begin position="10"/>
        <end position="23"/>
    </location>
</feature>
<feature type="disulfide bond" evidence="2">
    <location>
        <begin position="17"/>
        <end position="30"/>
    </location>
</feature>
<reference key="1">
    <citation type="journal article" date="2004" name="Rapid Commun. Mass Spectrom.">
        <title>Nanospray analysis of the venom of the tarantula Theraphosa leblondi: a powerful method for direct venom mass fingerprinting and toxin sequencing.</title>
        <authorList>
            <person name="Legros C."/>
            <person name="Celerier M.-L."/>
            <person name="Henry M."/>
            <person name="Guette C."/>
        </authorList>
    </citation>
    <scope>PROTEIN SEQUENCE</scope>
    <scope>FUNCTION</scope>
    <scope>MASS SPECTROMETRY</scope>
    <source>
        <tissue>Venom</tissue>
    </source>
</reference>
<reference key="2">
    <citation type="journal article" date="2004" name="Toxicon">
        <title>Modulation of Kv4.2 channels by a peptide isolated from the venom of the giant bird-eating tarantula Theraphosa leblondi.</title>
        <authorList>
            <person name="Ebbinghaus J."/>
            <person name="Legros C."/>
            <person name="Nolting A."/>
            <person name="Guette C."/>
            <person name="Celerier M.L."/>
            <person name="Pongs O."/>
            <person name="Bahring R."/>
        </authorList>
    </citation>
    <scope>FUNCTION</scope>
    <scope>MASS SPECTROMETRY</scope>
    <source>
        <tissue>Venom</tissue>
    </source>
</reference>
<organism>
    <name type="scientific">Theraphosa blondi</name>
    <name type="common">Goliath birdeating spider</name>
    <dbReference type="NCBI Taxonomy" id="260533"/>
    <lineage>
        <taxon>Eukaryota</taxon>
        <taxon>Metazoa</taxon>
        <taxon>Ecdysozoa</taxon>
        <taxon>Arthropoda</taxon>
        <taxon>Chelicerata</taxon>
        <taxon>Arachnida</taxon>
        <taxon>Araneae</taxon>
        <taxon>Mygalomorphae</taxon>
        <taxon>Theraphosidae</taxon>
        <taxon>Theraphosa</taxon>
    </lineage>
</organism>
<proteinExistence type="evidence at protein level"/>
<accession>P83746</accession>
<comment type="function">
    <text evidence="3 4">Low-affinity blocker of Kv4.2/KCND2 voltage-gated potassium channels. Is presumed to shift the voltage-dependence of channel activation to more depolarized potentials and to bind to the S3-S4 linker region of the voltage sensor domain.</text>
</comment>
<comment type="subunit">
    <text evidence="7">Monomer.</text>
</comment>
<comment type="subcellular location">
    <subcellularLocation>
        <location evidence="7">Secreted</location>
    </subcellularLocation>
</comment>
<comment type="tissue specificity">
    <text evidence="7">Expressed by the venom gland.</text>
</comment>
<comment type="domain">
    <text evidence="1">The presence of a 'disulfide through disulfide knot' structurally defines this protein as a knottin.</text>
</comment>
<comment type="mass spectrometry"/>
<comment type="mass spectrometry">
    <text>Monoisotopic mass.</text>
</comment>
<comment type="similarity">
    <text evidence="7">Belongs to the neurotoxin 10 (Hwtx-1) family. 58 subfamily.</text>
</comment>
<name>TX2_THEBL</name>
<sequence>DDCLGMFSSCDPKNDKCCPNRVCRSRDQWCKYKLW</sequence>
<evidence type="ECO:0000250" key="1"/>
<evidence type="ECO:0000250" key="2">
    <source>
        <dbReference type="UniProtKB" id="P58426"/>
    </source>
</evidence>
<evidence type="ECO:0000269" key="3">
    <source>
    </source>
</evidence>
<evidence type="ECO:0000269" key="4">
    <source>
    </source>
</evidence>
<evidence type="ECO:0000303" key="5">
    <source>
    </source>
</evidence>
<evidence type="ECO:0000303" key="6">
    <source>
    </source>
</evidence>
<evidence type="ECO:0000305" key="7"/>
<keyword id="KW-0903">Direct protein sequencing</keyword>
<keyword id="KW-1015">Disulfide bond</keyword>
<keyword id="KW-0872">Ion channel impairing toxin</keyword>
<keyword id="KW-0960">Knottin</keyword>
<keyword id="KW-0528">Neurotoxin</keyword>
<keyword id="KW-0632">Potassium channel impairing toxin</keyword>
<keyword id="KW-0964">Secreted</keyword>
<keyword id="KW-0800">Toxin</keyword>
<keyword id="KW-1220">Voltage-gated potassium channel impairing toxin</keyword>
<dbReference type="SMR" id="P83746"/>
<dbReference type="ArachnoServer" id="AS000253">
    <property type="toxin name" value="kappa-theraphotoxin-Tb1b"/>
</dbReference>
<dbReference type="GO" id="GO:0005576">
    <property type="term" value="C:extracellular region"/>
    <property type="evidence" value="ECO:0007669"/>
    <property type="project" value="UniProtKB-SubCell"/>
</dbReference>
<dbReference type="GO" id="GO:0008200">
    <property type="term" value="F:ion channel inhibitor activity"/>
    <property type="evidence" value="ECO:0007669"/>
    <property type="project" value="InterPro"/>
</dbReference>
<dbReference type="GO" id="GO:0015459">
    <property type="term" value="F:potassium channel regulator activity"/>
    <property type="evidence" value="ECO:0007669"/>
    <property type="project" value="UniProtKB-KW"/>
</dbReference>
<dbReference type="GO" id="GO:0090729">
    <property type="term" value="F:toxin activity"/>
    <property type="evidence" value="ECO:0007669"/>
    <property type="project" value="UniProtKB-KW"/>
</dbReference>
<dbReference type="InterPro" id="IPR011696">
    <property type="entry name" value="Huwentoxin-1"/>
</dbReference>
<dbReference type="Pfam" id="PF07740">
    <property type="entry name" value="Toxin_12"/>
    <property type="match status" value="1"/>
</dbReference>
<dbReference type="SUPFAM" id="SSF57059">
    <property type="entry name" value="omega toxin-like"/>
    <property type="match status" value="1"/>
</dbReference>
<protein>
    <recommendedName>
        <fullName>Kappa-theraphotoxin-Tb1b</fullName>
        <shortName>Kappa-TRTX-Tb1b</shortName>
    </recommendedName>
    <alternativeName>
        <fullName>Theraphotoxin-2</fullName>
    </alternativeName>
    <alternativeName>
        <fullName evidence="5 6">TlTx2</fullName>
    </alternativeName>
</protein>